<protein>
    <recommendedName>
        <fullName>Kappa-theraphotoxin-Hm2a</fullName>
        <shortName>Kappa-TRTX-Hm2a</shortName>
    </recommendedName>
    <alternativeName>
        <fullName evidence="3">Heteroscodratoxin-2</fullName>
        <shortName evidence="3">HmTx2</shortName>
    </alternativeName>
</protein>
<evidence type="ECO:0000250" key="1">
    <source>
        <dbReference type="UniProtKB" id="P60590"/>
    </source>
</evidence>
<evidence type="ECO:0000269" key="2">
    <source>
    </source>
</evidence>
<evidence type="ECO:0000303" key="3">
    <source>
    </source>
</evidence>
<evidence type="ECO:0000305" key="4"/>
<evidence type="ECO:0000305" key="5">
    <source>
    </source>
</evidence>
<reference key="1">
    <citation type="journal article" date="2002" name="Mol. Pharmacol.">
        <title>Novel tarantula toxins for subtypes of voltage-dependent potassium channels in the Kv2 and Kv4 subfamilies.</title>
        <authorList>
            <person name="Escoubas P."/>
            <person name="Diochot S."/>
            <person name="Celerier M.-L."/>
            <person name="Nakajima T."/>
            <person name="Lazdunski M."/>
        </authorList>
    </citation>
    <scope>PROTEIN SEQUENCE</scope>
    <scope>FUNCTION</scope>
    <scope>MASS SPECTROMETRY</scope>
    <scope>3D-STRUCTURE MODELING</scope>
    <scope>SUBCELLULAR LOCATION</scope>
    <scope>AMIDATION AT PHE-38</scope>
    <source>
        <tissue>Venom</tissue>
    </source>
</reference>
<keyword id="KW-0027">Amidation</keyword>
<keyword id="KW-0903">Direct protein sequencing</keyword>
<keyword id="KW-1015">Disulfide bond</keyword>
<keyword id="KW-0872">Ion channel impairing toxin</keyword>
<keyword id="KW-0960">Knottin</keyword>
<keyword id="KW-0528">Neurotoxin</keyword>
<keyword id="KW-0632">Potassium channel impairing toxin</keyword>
<keyword id="KW-0964">Secreted</keyword>
<keyword id="KW-0800">Toxin</keyword>
<keyword id="KW-1220">Voltage-gated potassium channel impairing toxin</keyword>
<comment type="function">
    <text evidence="2">Inhibitor of voltage-gated potassium channels. It specifically inhibits Kv2.1/KCNB1 channels.</text>
</comment>
<comment type="subcellular location">
    <subcellularLocation>
        <location evidence="2">Secreted</location>
    </subcellularLocation>
</comment>
<comment type="tissue specificity">
    <text evidence="5">Expressed by the venom gland.</text>
</comment>
<comment type="domain">
    <text evidence="1">The presence of a 'disulfide through disulfide knot' structurally defines this protein as a knottin.</text>
</comment>
<comment type="mass spectrometry" mass="4754.09" method="MALDI" evidence="2"/>
<comment type="miscellaneous">
    <text evidence="2">Negative results: only weakly inhibits Kv2.1/KCNB1 (18% current inhibition at 300 nM). Has no activity on Kv2.2/KCNB2, Kv4.1/KCND1, Kv4.2/KCND2 and Kv4.3/KCND3. In addition, intracerebroventricular injection into mice does not induce observable neurotoxicity symptoms (PubMed:12065754).</text>
</comment>
<comment type="similarity">
    <text evidence="4">Belongs to the neurotoxin 10 (Hwtx-1) family. 13 (Hntx-13) subfamily.</text>
</comment>
<accession>P60993</accession>
<organism>
    <name type="scientific">Heteroscodra maculata</name>
    <name type="common">Togo starburst tarantula</name>
    <name type="synonym">Togo starburst baboon spider</name>
    <dbReference type="NCBI Taxonomy" id="268413"/>
    <lineage>
        <taxon>Eukaryota</taxon>
        <taxon>Metazoa</taxon>
        <taxon>Ecdysozoa</taxon>
        <taxon>Arthropoda</taxon>
        <taxon>Chelicerata</taxon>
        <taxon>Arachnida</taxon>
        <taxon>Araneae</taxon>
        <taxon>Mygalomorphae</taxon>
        <taxon>Theraphosidae</taxon>
        <taxon>Heteroscodra</taxon>
    </lineage>
</organism>
<name>TX2_HETMC</name>
<dbReference type="SMR" id="P60993"/>
<dbReference type="ArachnoServer" id="AS000250">
    <property type="toxin name" value="kappa-theraphotoxin-Hm2a"/>
</dbReference>
<dbReference type="GO" id="GO:0005576">
    <property type="term" value="C:extracellular region"/>
    <property type="evidence" value="ECO:0007669"/>
    <property type="project" value="UniProtKB-SubCell"/>
</dbReference>
<dbReference type="GO" id="GO:0008200">
    <property type="term" value="F:ion channel inhibitor activity"/>
    <property type="evidence" value="ECO:0007669"/>
    <property type="project" value="InterPro"/>
</dbReference>
<dbReference type="GO" id="GO:0015459">
    <property type="term" value="F:potassium channel regulator activity"/>
    <property type="evidence" value="ECO:0007669"/>
    <property type="project" value="UniProtKB-KW"/>
</dbReference>
<dbReference type="GO" id="GO:0090729">
    <property type="term" value="F:toxin activity"/>
    <property type="evidence" value="ECO:0007669"/>
    <property type="project" value="UniProtKB-KW"/>
</dbReference>
<dbReference type="InterPro" id="IPR011696">
    <property type="entry name" value="Huwentoxin-1"/>
</dbReference>
<dbReference type="Pfam" id="PF07740">
    <property type="entry name" value="Toxin_12"/>
    <property type="match status" value="1"/>
</dbReference>
<dbReference type="SUPFAM" id="SSF57059">
    <property type="entry name" value="omega toxin-like"/>
    <property type="match status" value="1"/>
</dbReference>
<feature type="peptide" id="PRO_0000045018" description="Kappa-theraphotoxin-Hm2a" evidence="2">
    <location>
        <begin position="1"/>
        <end position="38"/>
    </location>
</feature>
<feature type="modified residue" description="Phenylalanine amide" evidence="2">
    <location>
        <position position="38"/>
    </location>
</feature>
<feature type="disulfide bond" evidence="1">
    <location>
        <begin position="2"/>
        <end position="16"/>
    </location>
</feature>
<feature type="disulfide bond" evidence="1">
    <location>
        <begin position="9"/>
        <end position="21"/>
    </location>
</feature>
<feature type="disulfide bond" evidence="1">
    <location>
        <begin position="15"/>
        <end position="32"/>
    </location>
</feature>
<sequence length="38" mass="4765">ECRYFWGECNDEMVCCEHLVCKEKWPITYKICVWDRTF</sequence>
<proteinExistence type="evidence at protein level"/>